<name>RL19_BURA4</name>
<organism>
    <name type="scientific">Burkholderia ambifaria (strain MC40-6)</name>
    <dbReference type="NCBI Taxonomy" id="398577"/>
    <lineage>
        <taxon>Bacteria</taxon>
        <taxon>Pseudomonadati</taxon>
        <taxon>Pseudomonadota</taxon>
        <taxon>Betaproteobacteria</taxon>
        <taxon>Burkholderiales</taxon>
        <taxon>Burkholderiaceae</taxon>
        <taxon>Burkholderia</taxon>
        <taxon>Burkholderia cepacia complex</taxon>
    </lineage>
</organism>
<accession>B1YV60</accession>
<keyword id="KW-0687">Ribonucleoprotein</keyword>
<keyword id="KW-0689">Ribosomal protein</keyword>
<sequence>MNLIAKLEQEEIERALAGKTIPEFAPGDTVIVNVNVVEGNRKRVQAYEGVVIAIRNRGLNSNFIVRKISSGEGVERTFQTYSPLLASIVVKRRGDVRRAKLYYLRERSGKSARIKEKLVSKDRTAAASQE</sequence>
<reference key="1">
    <citation type="submission" date="2008-04" db="EMBL/GenBank/DDBJ databases">
        <title>Complete sequence of chromosome 1 of Burkholderia ambifaria MC40-6.</title>
        <authorList>
            <person name="Copeland A."/>
            <person name="Lucas S."/>
            <person name="Lapidus A."/>
            <person name="Glavina del Rio T."/>
            <person name="Dalin E."/>
            <person name="Tice H."/>
            <person name="Pitluck S."/>
            <person name="Chain P."/>
            <person name="Malfatti S."/>
            <person name="Shin M."/>
            <person name="Vergez L."/>
            <person name="Lang D."/>
            <person name="Schmutz J."/>
            <person name="Larimer F."/>
            <person name="Land M."/>
            <person name="Hauser L."/>
            <person name="Kyrpides N."/>
            <person name="Lykidis A."/>
            <person name="Ramette A."/>
            <person name="Konstantinidis K."/>
            <person name="Tiedje J."/>
            <person name="Richardson P."/>
        </authorList>
    </citation>
    <scope>NUCLEOTIDE SEQUENCE [LARGE SCALE GENOMIC DNA]</scope>
    <source>
        <strain>MC40-6</strain>
    </source>
</reference>
<proteinExistence type="inferred from homology"/>
<comment type="function">
    <text evidence="1">This protein is located at the 30S-50S ribosomal subunit interface and may play a role in the structure and function of the aminoacyl-tRNA binding site.</text>
</comment>
<comment type="similarity">
    <text evidence="1">Belongs to the bacterial ribosomal protein bL19 family.</text>
</comment>
<feature type="chain" id="PRO_1000193798" description="Large ribosomal subunit protein bL19">
    <location>
        <begin position="1"/>
        <end position="130"/>
    </location>
</feature>
<protein>
    <recommendedName>
        <fullName evidence="1">Large ribosomal subunit protein bL19</fullName>
    </recommendedName>
    <alternativeName>
        <fullName evidence="2">50S ribosomal protein L19</fullName>
    </alternativeName>
</protein>
<evidence type="ECO:0000255" key="1">
    <source>
        <dbReference type="HAMAP-Rule" id="MF_00402"/>
    </source>
</evidence>
<evidence type="ECO:0000305" key="2"/>
<dbReference type="EMBL" id="CP001025">
    <property type="protein sequence ID" value="ACB63443.1"/>
    <property type="molecule type" value="Genomic_DNA"/>
</dbReference>
<dbReference type="RefSeq" id="WP_011883860.1">
    <property type="nucleotide sequence ID" value="NC_010551.1"/>
</dbReference>
<dbReference type="SMR" id="B1YV60"/>
<dbReference type="GeneID" id="55505849"/>
<dbReference type="KEGG" id="bac:BamMC406_0952"/>
<dbReference type="HOGENOM" id="CLU_103507_1_0_4"/>
<dbReference type="OrthoDB" id="9803541at2"/>
<dbReference type="Proteomes" id="UP000001680">
    <property type="component" value="Chromosome 1"/>
</dbReference>
<dbReference type="GO" id="GO:0022625">
    <property type="term" value="C:cytosolic large ribosomal subunit"/>
    <property type="evidence" value="ECO:0007669"/>
    <property type="project" value="TreeGrafter"/>
</dbReference>
<dbReference type="GO" id="GO:0003735">
    <property type="term" value="F:structural constituent of ribosome"/>
    <property type="evidence" value="ECO:0007669"/>
    <property type="project" value="InterPro"/>
</dbReference>
<dbReference type="GO" id="GO:0006412">
    <property type="term" value="P:translation"/>
    <property type="evidence" value="ECO:0007669"/>
    <property type="project" value="UniProtKB-UniRule"/>
</dbReference>
<dbReference type="FunFam" id="2.30.30.790:FF:000001">
    <property type="entry name" value="50S ribosomal protein L19"/>
    <property type="match status" value="1"/>
</dbReference>
<dbReference type="Gene3D" id="2.30.30.790">
    <property type="match status" value="1"/>
</dbReference>
<dbReference type="HAMAP" id="MF_00402">
    <property type="entry name" value="Ribosomal_bL19"/>
    <property type="match status" value="1"/>
</dbReference>
<dbReference type="InterPro" id="IPR001857">
    <property type="entry name" value="Ribosomal_bL19"/>
</dbReference>
<dbReference type="InterPro" id="IPR018257">
    <property type="entry name" value="Ribosomal_bL19_CS"/>
</dbReference>
<dbReference type="InterPro" id="IPR038657">
    <property type="entry name" value="Ribosomal_bL19_sf"/>
</dbReference>
<dbReference type="InterPro" id="IPR008991">
    <property type="entry name" value="Translation_prot_SH3-like_sf"/>
</dbReference>
<dbReference type="NCBIfam" id="TIGR01024">
    <property type="entry name" value="rplS_bact"/>
    <property type="match status" value="1"/>
</dbReference>
<dbReference type="PANTHER" id="PTHR15680:SF9">
    <property type="entry name" value="LARGE RIBOSOMAL SUBUNIT PROTEIN BL19M"/>
    <property type="match status" value="1"/>
</dbReference>
<dbReference type="PANTHER" id="PTHR15680">
    <property type="entry name" value="RIBOSOMAL PROTEIN L19"/>
    <property type="match status" value="1"/>
</dbReference>
<dbReference type="Pfam" id="PF01245">
    <property type="entry name" value="Ribosomal_L19"/>
    <property type="match status" value="1"/>
</dbReference>
<dbReference type="PIRSF" id="PIRSF002191">
    <property type="entry name" value="Ribosomal_L19"/>
    <property type="match status" value="1"/>
</dbReference>
<dbReference type="PRINTS" id="PR00061">
    <property type="entry name" value="RIBOSOMALL19"/>
</dbReference>
<dbReference type="SUPFAM" id="SSF50104">
    <property type="entry name" value="Translation proteins SH3-like domain"/>
    <property type="match status" value="1"/>
</dbReference>
<dbReference type="PROSITE" id="PS01015">
    <property type="entry name" value="RIBOSOMAL_L19"/>
    <property type="match status" value="1"/>
</dbReference>
<gene>
    <name evidence="1" type="primary">rplS</name>
    <name type="ordered locus">BamMC406_0952</name>
</gene>